<evidence type="ECO:0000250" key="1"/>
<evidence type="ECO:0000250" key="2">
    <source>
        <dbReference type="UniProtKB" id="P12530"/>
    </source>
</evidence>
<evidence type="ECO:0000250" key="3">
    <source>
        <dbReference type="UniProtKB" id="P16050"/>
    </source>
</evidence>
<evidence type="ECO:0000250" key="4">
    <source>
        <dbReference type="UniProtKB" id="P39654"/>
    </source>
</evidence>
<evidence type="ECO:0000250" key="5">
    <source>
        <dbReference type="UniProtKB" id="Q02759"/>
    </source>
</evidence>
<evidence type="ECO:0000255" key="6">
    <source>
        <dbReference type="PROSITE-ProRule" id="PRU00152"/>
    </source>
</evidence>
<evidence type="ECO:0000255" key="7">
    <source>
        <dbReference type="PROSITE-ProRule" id="PRU00726"/>
    </source>
</evidence>
<evidence type="ECO:0000269" key="8">
    <source>
    </source>
</evidence>
<evidence type="ECO:0000269" key="9">
    <source>
    </source>
</evidence>
<evidence type="ECO:0000269" key="10">
    <source>
    </source>
</evidence>
<evidence type="ECO:0000269" key="11">
    <source>
    </source>
</evidence>
<evidence type="ECO:0000305" key="12"/>
<evidence type="ECO:0000305" key="13">
    <source>
    </source>
</evidence>
<evidence type="ECO:0000305" key="14">
    <source>
    </source>
</evidence>
<evidence type="ECO:0000305" key="15">
    <source>
    </source>
</evidence>
<evidence type="ECO:0000305" key="16">
    <source>
    </source>
</evidence>
<evidence type="ECO:0007829" key="17">
    <source>
        <dbReference type="PDB" id="3RDE"/>
    </source>
</evidence>
<comment type="function">
    <text evidence="3 4 5 8 9 10 11">Non-heme iron-containing dioxygenase that catalyzes the stereo-specific peroxidation of free and esterified polyunsaturated fatty acids generating a spectrum of bioactive lipid mediators (PubMed:17493578, PubMed:18311922, PubMed:19324874, PubMed:8305485). It inserts peroxyl groups at C12 or C15 of arachidonate ((5Z,8Z,11Z,14Z)-eicosatetraenoate) producing both 12-hydroperoxyeicosatetraenoate/12-HPETE and 15-hydroperoxyeicosatetraenoate/15-HPETE (PubMed:17493578, PubMed:8305485). It may then act on 12-HPETE to produce hepoxilins, which may show pro-inflammatory properties (By similarity). Can also peroxidize linoleate ((9Z,12Z)-octadecadienoate) to 13-hydroperoxyoctadecadienoate. May participate in the sequential oxidations of DHA ((4Z,7Z,10Z,13Z,16Z,19Z)-docosahexaenoate) to generate specialized pro-resolving mediators (SPMs)like resolvin D5 ((7S,17S)-diHPDHA) and (7S,14S)-diHPDHA, that actively down-regulate the immune response and have anti-aggregation properties with platelets. Can convert epoxy fatty acids to hydroperoxy-epoxides derivatives followed by an intramolecular nucleophilic substitution leading to the formation of monocyclic endoperoxides (By similarity). Plays an important role during the maintenance of self-tolerance by peroxidizing membrane-bound phosphatidylethanolamine which can then signal the sorting process for clearance of apoptotic cells during inflammation and prevent an autoimmune response. In addition to its role in the immune and inflammatory responses, this enzyme may play a role in epithelial wound healing in the cornea through production of lipoxin A4 (LXA(4)) and docosahexaenoic acid-derived neuroprotectin D1 (NPD1; 10R,17S-HDHA), both lipid autacoids exhibit anti-inflammatory and neuroprotective properties. Furthermore, it may regulate actin polymerization which is crucial for several biological processes such as the phagocytosis of apoptotic cells. It is also implicated in the generation of endogenous ligands for peroxisome proliferator activated receptor (PPAR-gamma), hence modulating macrophage development and function. It may also exert a negative effect on skeletal development by regulating bone mass through this pathway. As well as participates in ER stress and downstream inflammation in adipocytes, pancreatic islets, and liver (By similarity). Finally, it is also involved in the cellular response to IL13/interleukin-13 (By similarity).</text>
</comment>
<comment type="catalytic activity">
    <reaction evidence="8 11">
        <text>(5Z,8Z,11Z,14Z)-eicosatetraenoate + O2 = (12S)-hydroperoxy-(5Z,8Z,10E,14Z)-eicosatetraenoate</text>
        <dbReference type="Rhea" id="RHEA:10428"/>
        <dbReference type="ChEBI" id="CHEBI:15379"/>
        <dbReference type="ChEBI" id="CHEBI:32395"/>
        <dbReference type="ChEBI" id="CHEBI:57444"/>
        <dbReference type="EC" id="1.13.11.31"/>
    </reaction>
    <physiologicalReaction direction="left-to-right" evidence="13">
        <dbReference type="Rhea" id="RHEA:10429"/>
    </physiologicalReaction>
</comment>
<comment type="catalytic activity">
    <reaction evidence="11">
        <text>(5Z,8Z,11Z,14Z)-eicosatetraenoate + O2 = (15S)-hydroperoxy-(5Z,8Z,11Z,13E)-eicosatetraenoate</text>
        <dbReference type="Rhea" id="RHEA:16869"/>
        <dbReference type="ChEBI" id="CHEBI:15379"/>
        <dbReference type="ChEBI" id="CHEBI:32395"/>
        <dbReference type="ChEBI" id="CHEBI:57446"/>
        <dbReference type="EC" id="1.13.11.33"/>
    </reaction>
    <physiologicalReaction direction="left-to-right" evidence="16">
        <dbReference type="Rhea" id="RHEA:16870"/>
    </physiologicalReaction>
</comment>
<comment type="catalytic activity">
    <reaction evidence="3">
        <text>(9Z,12Z)-octadecadienoate + O2 = (13S)-hydroperoxy-(9Z,11E)-octadecadienoate</text>
        <dbReference type="Rhea" id="RHEA:22780"/>
        <dbReference type="ChEBI" id="CHEBI:15379"/>
        <dbReference type="ChEBI" id="CHEBI:30245"/>
        <dbReference type="ChEBI" id="CHEBI:57466"/>
        <dbReference type="EC" id="1.13.11.12"/>
    </reaction>
    <physiologicalReaction direction="left-to-right" evidence="3">
        <dbReference type="Rhea" id="RHEA:22781"/>
    </physiologicalReaction>
</comment>
<comment type="catalytic activity">
    <reaction evidence="3">
        <text>(5Z,8Z,11Z,14Z)-eicosatetraenoate + 2 O2 = (14R,15S)-dihydroperoxy-(5Z,8Z,10E,12E)-eicosatetraenoate</text>
        <dbReference type="Rhea" id="RHEA:50928"/>
        <dbReference type="ChEBI" id="CHEBI:15379"/>
        <dbReference type="ChEBI" id="CHEBI:32395"/>
        <dbReference type="ChEBI" id="CHEBI:133900"/>
    </reaction>
    <physiologicalReaction direction="left-to-right" evidence="3">
        <dbReference type="Rhea" id="RHEA:50929"/>
    </physiologicalReaction>
</comment>
<comment type="catalytic activity">
    <reaction evidence="3">
        <text>(5Z,8Z,11Z,14Z)-eicosatetraenoate + 2 O2 = (8S,15S)-dihydroperoxy-(5Z,9E,11Z,13E)-eicosatetraenoate</text>
        <dbReference type="Rhea" id="RHEA:50924"/>
        <dbReference type="ChEBI" id="CHEBI:15379"/>
        <dbReference type="ChEBI" id="CHEBI:32395"/>
        <dbReference type="ChEBI" id="CHEBI:133899"/>
    </reaction>
    <physiologicalReaction direction="left-to-right" evidence="3">
        <dbReference type="Rhea" id="RHEA:50925"/>
    </physiologicalReaction>
</comment>
<comment type="catalytic activity">
    <reaction evidence="3">
        <text>(14S,15R)-epoxy-(5Z,8Z,11Z)-eicosatrienoate + O2 = (8S)-hydroperoxy-(14S,15R)-epoxy-(5Z,9E,11Z)-eicosatrienoate</text>
        <dbReference type="Rhea" id="RHEA:50288"/>
        <dbReference type="ChEBI" id="CHEBI:15379"/>
        <dbReference type="ChEBI" id="CHEBI:131964"/>
        <dbReference type="ChEBI" id="CHEBI:132068"/>
    </reaction>
    <physiologicalReaction direction="left-to-right" evidence="3">
        <dbReference type="Rhea" id="RHEA:50289"/>
    </physiologicalReaction>
</comment>
<comment type="catalytic activity">
    <reaction evidence="3">
        <text>(14S,15R)-epoxy-(5Z,8Z,11Z)-eicosatrienoate + O2 = (12S)-hydroperoxy-(14S,15R)-epoxy-(5Z,8Z,10E)-eicosatrienoate</text>
        <dbReference type="Rhea" id="RHEA:50284"/>
        <dbReference type="ChEBI" id="CHEBI:15379"/>
        <dbReference type="ChEBI" id="CHEBI:131964"/>
        <dbReference type="ChEBI" id="CHEBI:132065"/>
    </reaction>
    <physiologicalReaction direction="left-to-right" evidence="3">
        <dbReference type="Rhea" id="RHEA:50285"/>
    </physiologicalReaction>
</comment>
<comment type="catalytic activity">
    <reaction evidence="3">
        <text>(14R,15S)-epoxy-(5Z,8Z,11Z)-eicosatrienoate + O2 = (5S)-hydroperoxy-(14R,15S)-epoxy-(6E,8Z,11Z)-eicosatrienoate</text>
        <dbReference type="Rhea" id="RHEA:50280"/>
        <dbReference type="ChEBI" id="CHEBI:15379"/>
        <dbReference type="ChEBI" id="CHEBI:131965"/>
        <dbReference type="ChEBI" id="CHEBI:132067"/>
    </reaction>
    <physiologicalReaction direction="left-to-right" evidence="3">
        <dbReference type="Rhea" id="RHEA:50281"/>
    </physiologicalReaction>
</comment>
<comment type="catalytic activity">
    <reaction evidence="3">
        <text>(14R,15S)-epoxy-(5Z,8Z,11Z)-eicosatrienoate + O2 = (12S)-hydroperoxy-(14R,15S)-epoxy-(5Z,8Z,10E)-eicosatrienoate</text>
        <dbReference type="Rhea" id="RHEA:50276"/>
        <dbReference type="ChEBI" id="CHEBI:15379"/>
        <dbReference type="ChEBI" id="CHEBI:131965"/>
        <dbReference type="ChEBI" id="CHEBI:132063"/>
    </reaction>
    <physiologicalReaction direction="left-to-right" evidence="3">
        <dbReference type="Rhea" id="RHEA:50277"/>
    </physiologicalReaction>
</comment>
<comment type="catalytic activity">
    <reaction evidence="3">
        <text>(15R)-hydroperoxy-(5Z,8Z,11Z,13E)-eicosatetraenoate = 15-oxo-(5Z,8Z,11Z,13E)-eicosatetraenoate + H2O</text>
        <dbReference type="Rhea" id="RHEA:50152"/>
        <dbReference type="ChEBI" id="CHEBI:15377"/>
        <dbReference type="ChEBI" id="CHEBI:57410"/>
        <dbReference type="ChEBI" id="CHEBI:82626"/>
    </reaction>
    <physiologicalReaction direction="left-to-right" evidence="3">
        <dbReference type="Rhea" id="RHEA:50153"/>
    </physiologicalReaction>
</comment>
<comment type="catalytic activity">
    <reaction evidence="3">
        <text>(15S)-hydroperoxy-(5Z,8Z,11Z,13E)-eicosatetraenoate = (14S,15S)-epoxy-(5Z,8Z,10E,12E)-eicosatetraenoate + H2O</text>
        <dbReference type="Rhea" id="RHEA:50140"/>
        <dbReference type="ChEBI" id="CHEBI:15377"/>
        <dbReference type="ChEBI" id="CHEBI:57446"/>
        <dbReference type="ChEBI" id="CHEBI:132070"/>
    </reaction>
    <physiologicalReaction direction="left-to-right" evidence="3">
        <dbReference type="Rhea" id="RHEA:50141"/>
    </physiologicalReaction>
</comment>
<comment type="catalytic activity">
    <reaction evidence="5">
        <text>(12S)-hydroperoxy-(5Z,8Z,10E,14Z)-eicosatetraenoate = (8S)-hydroxy-(11S,12S)-epoxy-(5Z,9E,14Z)-eicosatrienoate</text>
        <dbReference type="Rhea" id="RHEA:50216"/>
        <dbReference type="ChEBI" id="CHEBI:57444"/>
        <dbReference type="ChEBI" id="CHEBI:132129"/>
    </reaction>
    <physiologicalReaction direction="left-to-right" evidence="5">
        <dbReference type="Rhea" id="RHEA:50217"/>
    </physiologicalReaction>
</comment>
<comment type="catalytic activity">
    <reaction evidence="10">
        <text>(4Z,7Z,10Z,13Z,16Z,19Z)-docosahexaenoate + O2 = 14-hydroperoxy-(4Z,7Z,10Z,12E,16Z,19Z)-docosahexaenoate</text>
        <dbReference type="Rhea" id="RHEA:43472"/>
        <dbReference type="ChEBI" id="CHEBI:15379"/>
        <dbReference type="ChEBI" id="CHEBI:77016"/>
        <dbReference type="ChEBI" id="CHEBI:83336"/>
    </reaction>
    <physiologicalReaction direction="left-to-right" evidence="15">
        <dbReference type="Rhea" id="RHEA:43473"/>
    </physiologicalReaction>
</comment>
<comment type="catalytic activity">
    <reaction evidence="10">
        <text>(4Z,7Z,10Z,13Z,16Z)-docosapentaenoate + O2 = 14-hydroperoxy-(4Z,7Z,10Z,12E,16Z)-docosapentaenoate</text>
        <dbReference type="Rhea" id="RHEA:50824"/>
        <dbReference type="ChEBI" id="CHEBI:15379"/>
        <dbReference type="ChEBI" id="CHEBI:77226"/>
        <dbReference type="ChEBI" id="CHEBI:133799"/>
    </reaction>
    <physiologicalReaction direction="left-to-right" evidence="15">
        <dbReference type="Rhea" id="RHEA:50825"/>
    </physiologicalReaction>
</comment>
<comment type="catalytic activity">
    <reaction evidence="10">
        <text>(7Z,10Z,13Z,16Z,19Z)-docosapentaenoate + O2 = 14-hydroperoxy-(7Z,10Z,12E,16Z,19Z)-docosapentaenoate</text>
        <dbReference type="Rhea" id="RHEA:50836"/>
        <dbReference type="ChEBI" id="CHEBI:15379"/>
        <dbReference type="ChEBI" id="CHEBI:77224"/>
        <dbReference type="ChEBI" id="CHEBI:133798"/>
    </reaction>
    <physiologicalReaction direction="left-to-right" evidence="15">
        <dbReference type="Rhea" id="RHEA:50837"/>
    </physiologicalReaction>
</comment>
<comment type="catalytic activity">
    <reaction evidence="3">
        <text>(4Z,7Z,10Z,13Z,16Z,19Z)-docosahexaenoate + O2 = (14S)-hydroperoxy-(4Z,7Z,10Z,12E,16Z,19Z)-docosahexaenoate</text>
        <dbReference type="Rhea" id="RHEA:41332"/>
        <dbReference type="ChEBI" id="CHEBI:15379"/>
        <dbReference type="ChEBI" id="CHEBI:77016"/>
        <dbReference type="ChEBI" id="CHEBI:78048"/>
    </reaction>
    <physiologicalReaction direction="left-to-right" evidence="3">
        <dbReference type="Rhea" id="RHEA:41333"/>
    </physiologicalReaction>
</comment>
<comment type="catalytic activity">
    <reaction evidence="3">
        <text>(4Z,7Z,10Z,13Z,16Z,19Z)-docosahexaenoate + O2 = (17S)-hydroperoxy-(4Z,7Z,10Z,13Z,15E,19Z)-docosahexaenoate</text>
        <dbReference type="Rhea" id="RHEA:50840"/>
        <dbReference type="ChEBI" id="CHEBI:15379"/>
        <dbReference type="ChEBI" id="CHEBI:77016"/>
        <dbReference type="ChEBI" id="CHEBI:133795"/>
    </reaction>
    <physiologicalReaction direction="left-to-right" evidence="3">
        <dbReference type="Rhea" id="RHEA:50841"/>
    </physiologicalReaction>
</comment>
<comment type="catalytic activity">
    <reaction evidence="3">
        <text>(7S)-hydroperoxy-(4Z,8E,10Z,13Z,16Z,19Z)-docosahexaenoate + O2 = (7S,14S)-dihydroperoxy-(4Z,8E,10Z,12E,16Z,19Z)-docosahexaenoate</text>
        <dbReference type="Rhea" id="RHEA:64724"/>
        <dbReference type="ChEBI" id="CHEBI:15379"/>
        <dbReference type="ChEBI" id="CHEBI:156049"/>
        <dbReference type="ChEBI" id="CHEBI:156082"/>
    </reaction>
    <physiologicalReaction direction="left-to-right" evidence="3">
        <dbReference type="Rhea" id="RHEA:64725"/>
    </physiologicalReaction>
</comment>
<comment type="catalytic activity">
    <reaction evidence="3">
        <text>(7S)-hydroperoxy-(4Z,8E,10Z,13Z,16Z,19Z)-docosahexaenoate + O2 = (7S,17S)-dihydroperoxy-(4Z,8E,10Z,13Z,15E,19Z)-docosahexaenoate</text>
        <dbReference type="Rhea" id="RHEA:64728"/>
        <dbReference type="ChEBI" id="CHEBI:15379"/>
        <dbReference type="ChEBI" id="CHEBI:140349"/>
        <dbReference type="ChEBI" id="CHEBI:156049"/>
    </reaction>
    <physiologicalReaction direction="left-to-right" evidence="3">
        <dbReference type="Rhea" id="RHEA:64729"/>
    </physiologicalReaction>
</comment>
<comment type="catalytic activity">
    <reaction evidence="3">
        <text>(4Z,7Z,10Z,13Z,16Z,19Z)-docosahexaenoate + O2 = (11S)-hydroperoxy-(4Z,7Z,9E,13Z,16Z,19Z)-docosahexaenoate</text>
        <dbReference type="Rhea" id="RHEA:64732"/>
        <dbReference type="ChEBI" id="CHEBI:15379"/>
        <dbReference type="ChEBI" id="CHEBI:77016"/>
        <dbReference type="ChEBI" id="CHEBI:156131"/>
    </reaction>
    <physiologicalReaction direction="left-to-right" evidence="3">
        <dbReference type="Rhea" id="RHEA:64733"/>
    </physiologicalReaction>
</comment>
<comment type="catalytic activity">
    <reaction evidence="9">
        <text>N-(5Z,8Z,11Z,14Z)-eicosatetraenoyl-taurine + O2 = N-(12S)-hydroperoxy-(5Z,8Z,10E,14Z)-eicosatetraenoyl-taurine</text>
        <dbReference type="Rhea" id="RHEA:50160"/>
        <dbReference type="ChEBI" id="CHEBI:15379"/>
        <dbReference type="ChEBI" id="CHEBI:132060"/>
        <dbReference type="ChEBI" id="CHEBI:132061"/>
    </reaction>
    <physiologicalReaction direction="left-to-right" evidence="14">
        <dbReference type="Rhea" id="RHEA:50161"/>
    </physiologicalReaction>
</comment>
<comment type="catalytic activity">
    <reaction evidence="8">
        <text>N-(5Z,8Z,11Z,14Z)-eicosatetraenoyl-gamma-aminobutanoate + O2 = N-(12S)-hydroperoxy-(5Z,8Z,10E,14Z)-eicosatetraenoyl-gamma-aminobutanoate</text>
        <dbReference type="Rhea" id="RHEA:50176"/>
        <dbReference type="ChEBI" id="CHEBI:15379"/>
        <dbReference type="ChEBI" id="CHEBI:132072"/>
        <dbReference type="ChEBI" id="CHEBI:132075"/>
    </reaction>
    <physiologicalReaction direction="left-to-right" evidence="13">
        <dbReference type="Rhea" id="RHEA:50177"/>
    </physiologicalReaction>
</comment>
<comment type="catalytic activity">
    <reaction evidence="8">
        <text>N-(5Z,8Z,11Z,14Z)-eicosatetraenoyl-glycine + O2 = N-(12S)-hydroperoxy-(5Z,8Z,10E,14Z)-eicosatetraenoyl-glycine</text>
        <dbReference type="Rhea" id="RHEA:50168"/>
        <dbReference type="ChEBI" id="CHEBI:15379"/>
        <dbReference type="ChEBI" id="CHEBI:59002"/>
        <dbReference type="ChEBI" id="CHEBI:132073"/>
    </reaction>
    <physiologicalReaction direction="left-to-right" evidence="13">
        <dbReference type="Rhea" id="RHEA:50169"/>
    </physiologicalReaction>
</comment>
<comment type="catalytic activity">
    <reaction evidence="8">
        <text>N-(5Z,8Z,11Z,14Z)-eicosatetraenoyl-L-alanine + O2 = N-(12S)-hydroperoxy-(5Z,8Z,10E,14Z)-eicosatetraenoyl-alanine</text>
        <dbReference type="Rhea" id="RHEA:50172"/>
        <dbReference type="ChEBI" id="CHEBI:15379"/>
        <dbReference type="ChEBI" id="CHEBI:132071"/>
        <dbReference type="ChEBI" id="CHEBI:132074"/>
    </reaction>
    <physiologicalReaction direction="left-to-right" evidence="13">
        <dbReference type="Rhea" id="RHEA:50173"/>
    </physiologicalReaction>
</comment>
<comment type="catalytic activity">
    <reaction evidence="2">
        <text>N-(5Z,8Z,11Z,14Z)-eicosatetraenoyl-taurine + O2 = N-(15S)-hydroperoxy-(5Z,8Z,11Z,13E)-eicosatetraenoyl-taurine</text>
        <dbReference type="Rhea" id="RHEA:50156"/>
        <dbReference type="ChEBI" id="CHEBI:15379"/>
        <dbReference type="ChEBI" id="CHEBI:132060"/>
        <dbReference type="ChEBI" id="CHEBI:132062"/>
    </reaction>
    <physiologicalReaction direction="left-to-right" evidence="2">
        <dbReference type="Rhea" id="RHEA:50157"/>
    </physiologicalReaction>
</comment>
<comment type="catalytic activity">
    <reaction evidence="2">
        <text>N-(5Z,8Z,11Z,14Z)-eicosatetraenoyl-gamma-aminobutanoate + O2 = N-(15S)-hydroperoxy-(5Z,8Z,11Z,13E)-eicosatetraenoyl-gamma-aminobutanoate</text>
        <dbReference type="Rhea" id="RHEA:50180"/>
        <dbReference type="ChEBI" id="CHEBI:15379"/>
        <dbReference type="ChEBI" id="CHEBI:132072"/>
        <dbReference type="ChEBI" id="CHEBI:132078"/>
    </reaction>
    <physiologicalReaction direction="left-to-right" evidence="2">
        <dbReference type="Rhea" id="RHEA:50181"/>
    </physiologicalReaction>
</comment>
<comment type="catalytic activity">
    <reaction evidence="2">
        <text>N-(5Z,8Z,11Z,14Z)-eicosatetraenoyl-glycine + O2 = N-(15S)-hydroperoxy-(5Z,8Z,11Z,13E)-eicosatetraenoyl-glycine</text>
        <dbReference type="Rhea" id="RHEA:50188"/>
        <dbReference type="ChEBI" id="CHEBI:15379"/>
        <dbReference type="ChEBI" id="CHEBI:59002"/>
        <dbReference type="ChEBI" id="CHEBI:132076"/>
    </reaction>
    <physiologicalReaction direction="left-to-right" evidence="2">
        <dbReference type="Rhea" id="RHEA:50189"/>
    </physiologicalReaction>
</comment>
<comment type="catalytic activity">
    <reaction evidence="2">
        <text>N-(5Z,8Z,11Z,14Z)-eicosatetraenoyl-L-alanine + O2 = N-(15S)-hydroperoxy-(5Z,8Z,11Z,13E)-eicosatetraenoyl-alanine</text>
        <dbReference type="Rhea" id="RHEA:50184"/>
        <dbReference type="ChEBI" id="CHEBI:15379"/>
        <dbReference type="ChEBI" id="CHEBI:132071"/>
        <dbReference type="ChEBI" id="CHEBI:132077"/>
    </reaction>
    <physiologicalReaction direction="left-to-right" evidence="2">
        <dbReference type="Rhea" id="RHEA:50185"/>
    </physiologicalReaction>
</comment>
<comment type="cofactor">
    <cofactor evidence="7 11">
        <name>Fe cation</name>
        <dbReference type="ChEBI" id="CHEBI:24875"/>
    </cofactor>
    <text evidence="7 11">Binds 1 Fe cation per subunit.</text>
</comment>
<comment type="biophysicochemical properties">
    <kinetics>
        <KM evidence="8">7.8 uM for (5Z,8Z,11Z,14Z)-eicosatetraenoate</KM>
        <KM evidence="8">8 uM for N-(5Z,8Z,11Z,14Z)-eicosatetraenoyl-glycine</KM>
        <KM evidence="8">9 uM for N-(5Z,8Z,11Z,14Z)-eicosatetraenoyl-alanine</KM>
        <KM evidence="8">7.8 uM for N-(5Z,8Z,11Z,14Z)-eicosatetraenoyl-gamma-aminobutanoate</KM>
        <Vmax evidence="8">13.1 umol/sec/ug enzyme towards (5Z,8Z,11Z,14Z)-eicosatetraenoate</Vmax>
        <Vmax evidence="8">9.9 umol/sec/ug enzyme towards N-(5Z,8Z,11Z,14Z)-eicosatetraenoyl-glycine</Vmax>
        <Vmax evidence="8">7.6 umol/sec/ug enzyme towards N-(5Z,8Z,11Z,14Z)-eicosatetraenoyl-alanine</Vmax>
        <Vmax evidence="8">10.4 umol/sec/ug enzyme towards N-(5Z,8Z,11Z,14Z)-eicosatetraenoyl-gamma-aminobutanoate</Vmax>
    </kinetics>
</comment>
<comment type="pathway">
    <text evidence="11">Lipid metabolism; hydroperoxy eicosatetraenoic acid biosynthesis.</text>
</comment>
<comment type="subunit">
    <text evidence="3">Interacts with PEBP1; in response to IL13/interleukin-13, prevents the interaction of PEBP1 with RAF1 to activate the ERK signaling cascade.</text>
</comment>
<comment type="subcellular location">
    <subcellularLocation>
        <location evidence="3">Cytoplasm</location>
        <location evidence="3">Cytosol</location>
    </subcellularLocation>
    <subcellularLocation>
        <location evidence="3">Cell membrane</location>
        <topology evidence="3">Peripheral membrane protein</topology>
    </subcellularLocation>
    <subcellularLocation>
        <location evidence="3">Lipid droplet</location>
    </subcellularLocation>
    <text evidence="4">Predominantly cytosolic; becomes enriched at membranes upon calcium binding. Translocates from the cytosol to the plasma membrane when stimulated by IL13/interleukin-13 and in macrophages binding apoptotic cells.</text>
</comment>
<comment type="domain">
    <text evidence="1">The PLAT domain can bind calcium ions; this promotes association with membranes.</text>
</comment>
<comment type="similarity">
    <text evidence="12">Belongs to the lipoxygenase family.</text>
</comment>
<accession>P16469</accession>
<accession>F1RFT4</accession>
<proteinExistence type="evidence at protein level"/>
<feature type="chain" id="PRO_0000220684" description="Polyunsaturated fatty acid lipoxygenase ALOX15">
    <location>
        <begin position="1"/>
        <end position="663"/>
    </location>
</feature>
<feature type="domain" description="PLAT" evidence="6">
    <location>
        <begin position="2"/>
        <end position="115"/>
    </location>
</feature>
<feature type="domain" description="Lipoxygenase" evidence="7">
    <location>
        <begin position="116"/>
        <end position="663"/>
    </location>
</feature>
<feature type="binding site">
    <location>
        <position position="361"/>
    </location>
    <ligand>
        <name>Fe cation</name>
        <dbReference type="ChEBI" id="CHEBI:24875"/>
        <note>catalytic</note>
    </ligand>
</feature>
<feature type="binding site">
    <location>
        <position position="366"/>
    </location>
    <ligand>
        <name>Fe cation</name>
        <dbReference type="ChEBI" id="CHEBI:24875"/>
        <note>catalytic</note>
    </ligand>
</feature>
<feature type="binding site">
    <location>
        <position position="541"/>
    </location>
    <ligand>
        <name>Fe cation</name>
        <dbReference type="ChEBI" id="CHEBI:24875"/>
        <note>catalytic</note>
    </ligand>
</feature>
<feature type="binding site">
    <location>
        <position position="545"/>
    </location>
    <ligand>
        <name>Fe cation</name>
        <dbReference type="ChEBI" id="CHEBI:24875"/>
        <note>catalytic</note>
    </ligand>
</feature>
<feature type="binding site" evidence="7">
    <location>
        <position position="663"/>
    </location>
    <ligand>
        <name>Fe cation</name>
        <dbReference type="ChEBI" id="CHEBI:24875"/>
        <note>catalytic</note>
    </ligand>
</feature>
<feature type="mutagenesis site" description="No effect on the stereoselectivity of the oxygenation reaction." evidence="11">
    <original>I</original>
    <variation>V</variation>
    <location>
        <position position="106"/>
    </location>
</feature>
<feature type="mutagenesis site" description="No specific effect on enzymatic activity and iron-binding." evidence="11">
    <original>H</original>
    <variation>L</variation>
    <location>
        <position position="128"/>
    </location>
</feature>
<feature type="mutagenesis site" description="No specific effect on enzymatic activity and iron-binding." evidence="11">
    <original>H</original>
    <variation>L</variation>
    <location>
        <position position="356"/>
    </location>
</feature>
<feature type="mutagenesis site" description="Loss of enzymatic activity and iron-binding." evidence="11">
    <original>H</original>
    <variation>L</variation>
    <variation>Q</variation>
    <location>
        <position position="361"/>
    </location>
</feature>
<feature type="mutagenesis site" description="Loss of enzymatic activity and iron-binding." evidence="11">
    <original>H</original>
    <variation>L</variation>
    <location>
        <position position="366"/>
    </location>
</feature>
<feature type="mutagenesis site" description="Labile enzyme with normal enzymatic activity." evidence="11">
    <original>H</original>
    <variation>L</variation>
    <location>
        <position position="384"/>
    </location>
</feature>
<feature type="mutagenesis site" description="Labile enzyme with loss of enzymatic activity." evidence="11">
    <original>H</original>
    <variation>L</variation>
    <location>
        <position position="393"/>
    </location>
</feature>
<feature type="mutagenesis site" description="No effect on the stereoselectivity of the oxygenation reaction." evidence="11">
    <original>M</original>
    <variation>L</variation>
    <location>
        <position position="398"/>
    </location>
</feature>
<feature type="mutagenesis site" description="Alters the stereoselectivity of the oxygenation reaction. Changes the stereoselectivity of the oxygenation toward the production of (15S)-HPETE; when associated with M-419." evidence="11">
    <original>V</original>
    <variation>I</variation>
    <location>
        <position position="418"/>
    </location>
</feature>
<feature type="mutagenesis site" description="Alters the stereoselectivity of the oxygenation reaction. Changes the stereoselectivity of the oxygenation toward the production of (15S)-HPETE; when associated with I-418." evidence="11">
    <original>V</original>
    <variation>M</variation>
    <location>
        <position position="419"/>
    </location>
</feature>
<feature type="mutagenesis site" description="Decreased enzymatic activity without effect on iron-binding." evidence="11">
    <original>H</original>
    <variation>L</variation>
    <location>
        <position position="426"/>
    </location>
</feature>
<feature type="mutagenesis site" description="No specific effect on enzymatic activity and iron-binding." evidence="11">
    <original>C</original>
    <variation>S</variation>
    <location>
        <position position="533"/>
    </location>
</feature>
<feature type="mutagenesis site" description="Loss of enzymatic activity and iron-binding." evidence="11">
    <original>H</original>
    <variation>L</variation>
    <location>
        <position position="541"/>
    </location>
</feature>
<feature type="sequence conflict" description="In Ref. 1; AAA31068/BAA01471." evidence="12" ref="1">
    <original>R</original>
    <variation>Q</variation>
    <location>
        <position position="218"/>
    </location>
</feature>
<feature type="sequence conflict" description="In Ref. 1; AAA31068/BAA01471." evidence="12" ref="1">
    <original>H</original>
    <variation>R</variation>
    <location>
        <position position="323"/>
    </location>
</feature>
<feature type="sequence conflict" description="In Ref. 1; AAA31068/BAA01471." evidence="12" ref="1">
    <original>L</original>
    <variation>F</variation>
    <location>
        <position position="494"/>
    </location>
</feature>
<feature type="sequence conflict" description="In Ref. 1; AAA31068/BAA01471." evidence="12" ref="1">
    <original>S</original>
    <variation>T</variation>
    <location>
        <position position="553"/>
    </location>
</feature>
<feature type="sequence conflict" description="In Ref. 1; BAA01471." evidence="12" ref="1">
    <original>V</original>
    <variation>G</variation>
    <location>
        <position position="623"/>
    </location>
</feature>
<feature type="helix" evidence="17">
    <location>
        <begin position="126"/>
        <end position="139"/>
    </location>
</feature>
<feature type="helix" evidence="17">
    <location>
        <begin position="158"/>
        <end position="160"/>
    </location>
</feature>
<feature type="helix" evidence="17">
    <location>
        <begin position="163"/>
        <end position="165"/>
    </location>
</feature>
<feature type="helix" evidence="17">
    <location>
        <begin position="169"/>
        <end position="193"/>
    </location>
</feature>
<feature type="helix" evidence="17">
    <location>
        <begin position="201"/>
        <end position="207"/>
    </location>
</feature>
<feature type="helix" evidence="17">
    <location>
        <begin position="214"/>
        <end position="222"/>
    </location>
</feature>
<feature type="helix" evidence="17">
    <location>
        <begin position="226"/>
        <end position="235"/>
    </location>
</feature>
<feature type="helix" evidence="17">
    <location>
        <begin position="259"/>
        <end position="270"/>
    </location>
</feature>
<feature type="strand" evidence="17">
    <location>
        <begin position="274"/>
        <end position="278"/>
    </location>
</feature>
<feature type="helix" evidence="17">
    <location>
        <begin position="280"/>
        <end position="282"/>
    </location>
</feature>
<feature type="strand" evidence="17">
    <location>
        <begin position="301"/>
        <end position="306"/>
    </location>
</feature>
<feature type="strand" evidence="17">
    <location>
        <begin position="312"/>
        <end position="318"/>
    </location>
</feature>
<feature type="helix" evidence="17">
    <location>
        <begin position="338"/>
        <end position="358"/>
    </location>
</feature>
<feature type="helix" evidence="17">
    <location>
        <begin position="359"/>
        <end position="365"/>
    </location>
</feature>
<feature type="helix" evidence="17">
    <location>
        <begin position="366"/>
        <end position="379"/>
    </location>
</feature>
<feature type="helix" evidence="17">
    <location>
        <begin position="385"/>
        <end position="390"/>
    </location>
</feature>
<feature type="helix" evidence="17">
    <location>
        <begin position="391"/>
        <end position="394"/>
    </location>
</feature>
<feature type="helix" evidence="17">
    <location>
        <begin position="397"/>
        <end position="407"/>
    </location>
</feature>
<feature type="helix" evidence="17">
    <location>
        <begin position="414"/>
        <end position="418"/>
    </location>
</feature>
<feature type="turn" evidence="17">
    <location>
        <begin position="420"/>
        <end position="424"/>
    </location>
</feature>
<feature type="helix" evidence="17">
    <location>
        <begin position="425"/>
        <end position="436"/>
    </location>
</feature>
<feature type="helix" evidence="17">
    <location>
        <begin position="440"/>
        <end position="442"/>
    </location>
</feature>
<feature type="helix" evidence="17">
    <location>
        <begin position="444"/>
        <end position="450"/>
    </location>
</feature>
<feature type="helix" evidence="17">
    <location>
        <begin position="460"/>
        <end position="483"/>
    </location>
</feature>
<feature type="helix" evidence="17">
    <location>
        <begin position="487"/>
        <end position="491"/>
    </location>
</feature>
<feature type="helix" evidence="17">
    <location>
        <begin position="494"/>
        <end position="505"/>
    </location>
</feature>
<feature type="turn" evidence="17">
    <location>
        <begin position="506"/>
        <end position="509"/>
    </location>
</feature>
<feature type="helix" evidence="17">
    <location>
        <begin position="512"/>
        <end position="514"/>
    </location>
</feature>
<feature type="helix" evidence="17">
    <location>
        <begin position="523"/>
        <end position="537"/>
    </location>
</feature>
<feature type="helix" evidence="17">
    <location>
        <begin position="539"/>
        <end position="545"/>
    </location>
</feature>
<feature type="helix" evidence="17">
    <location>
        <begin position="548"/>
        <end position="551"/>
    </location>
</feature>
<feature type="strand" evidence="17">
    <location>
        <begin position="552"/>
        <end position="554"/>
    </location>
</feature>
<feature type="helix" evidence="17">
    <location>
        <begin position="555"/>
        <end position="557"/>
    </location>
</feature>
<feature type="strand" evidence="17">
    <location>
        <begin position="568"/>
        <end position="570"/>
    </location>
</feature>
<feature type="helix" evidence="17">
    <location>
        <begin position="574"/>
        <end position="580"/>
    </location>
</feature>
<feature type="helix" evidence="17">
    <location>
        <begin position="584"/>
        <end position="598"/>
    </location>
</feature>
<feature type="helix" evidence="17">
    <location>
        <begin position="618"/>
        <end position="643"/>
    </location>
</feature>
<feature type="strand" evidence="17">
    <location>
        <begin position="645"/>
        <end position="647"/>
    </location>
</feature>
<feature type="turn" evidence="17">
    <location>
        <begin position="654"/>
        <end position="656"/>
    </location>
</feature>
<feature type="strand" evidence="17">
    <location>
        <begin position="657"/>
        <end position="660"/>
    </location>
</feature>
<reference key="1">
    <citation type="journal article" date="1990" name="Proc. Natl. Acad. Sci. U.S.A.">
        <title>Cloning and sequence analysis of the cDNA for arachidonate 12-lipoxygenase of porcine leukocytes.</title>
        <authorList>
            <person name="Yoshimoto T."/>
            <person name="Suzuki H."/>
            <person name="Yamamoto S."/>
            <person name="Takai T."/>
            <person name="Yokoyama C."/>
            <person name="Tanabe T."/>
        </authorList>
    </citation>
    <scope>NUCLEOTIDE SEQUENCE [MRNA]</scope>
    <scope>PARTIAL PROTEIN SEQUENCE</scope>
    <source>
        <tissue>Leukocyte</tissue>
    </source>
</reference>
<reference key="2">
    <citation type="journal article" date="1992" name="J. Biol. Chem.">
        <title>Molecular structure and function of the porcine arachidonate 12-lipoxygenase gene.</title>
        <authorList>
            <person name="Arakawa T."/>
            <person name="Oshima T."/>
            <person name="Kishimoto K."/>
            <person name="Yoshimoto T."/>
            <person name="Yamamoto S."/>
        </authorList>
    </citation>
    <scope>NUCLEOTIDE SEQUENCE [GENOMIC DNA]</scope>
</reference>
<reference key="3">
    <citation type="submission" date="2009-11" db="EMBL/GenBank/DDBJ databases">
        <authorList>
            <consortium name="Porcine genome sequencing project"/>
        </authorList>
    </citation>
    <scope>NUCLEOTIDE SEQUENCE [LARGE SCALE GENOMIC DNA]</scope>
</reference>
<reference key="4">
    <citation type="journal article" date="1994" name="Biochim. Biophys. Acta">
        <title>Site-directed mutagenesis studies on the iron-binding domain and the determinant for the substrate oxygenation site of porcine leukocyte arachidonate 12-lipoxygenase.</title>
        <authorList>
            <person name="Suzuki H."/>
            <person name="Kishimoto K."/>
            <person name="Yoshimoto T."/>
            <person name="Yamamoto S."/>
            <person name="Kanai F."/>
            <person name="Ebina Y."/>
            <person name="Miyatake A."/>
            <person name="Tanabe T."/>
        </authorList>
    </citation>
    <scope>FUNCTION</scope>
    <scope>CATALYTIC ACTIVITY</scope>
    <scope>COFACTOR</scope>
    <scope>PATHWAY</scope>
    <scope>IRON-BINDING</scope>
    <scope>MUTAGENESIS OF ILE-106; HIS-128; HIS-356; HIS-361; HIS-366; HIS-384; HIS-393; MET-398; VAL-418; VAL-419; HIS-426; CYS-533 AND HIS-541</scope>
</reference>
<reference key="5">
    <citation type="journal article" date="2007" name="Arch. Biochem. Biophys.">
        <title>Oxidative metabolism of lipoamino acids and vanilloids by lipoxygenases and cyclooxygenases.</title>
        <authorList>
            <person name="Prusakiewicz J.J."/>
            <person name="Turman M.V."/>
            <person name="Vila A."/>
            <person name="Ball H.L."/>
            <person name="Al-Mestarihi A.H."/>
            <person name="Di Marzo V."/>
            <person name="Marnett L.J."/>
        </authorList>
    </citation>
    <scope>CATALYTIC ACTIVITY</scope>
    <scope>FUNCTION</scope>
</reference>
<reference key="6">
    <citation type="journal article" date="2008" name="Biochemistry">
        <title>Oxidative metabolism of a fatty acid amide hydrolase-regulated lipid, arachidonoyltaurine.</title>
        <authorList>
            <person name="Turman M.V."/>
            <person name="Kingsley P.J."/>
            <person name="Rouzer C.A."/>
            <person name="Cravatt B.F."/>
            <person name="Marnett L.J."/>
        </authorList>
    </citation>
    <scope>CATALYTIC ACTIVITY</scope>
    <scope>FUNCTION</scope>
</reference>
<reference key="7">
    <citation type="journal article" date="2009" name="J. Biol. Chem.">
        <title>Biogenic synthesis, purification, and chemical characterization of anti-inflammatory resolvins derived from docosapentaenoic acid (DPAn-6).</title>
        <authorList>
            <person name="Dangi B."/>
            <person name="Obeng M."/>
            <person name="Nauroth J.M."/>
            <person name="Teymourlouei M."/>
            <person name="Needham M."/>
            <person name="Raman K."/>
            <person name="Arterburn L.M."/>
        </authorList>
    </citation>
    <scope>CATALYTIC ACTIVITY</scope>
    <scope>FUNCTION</scope>
</reference>
<reference key="8">
    <citation type="journal article" date="2012" name="Structure">
        <title>Crystal structure of 12-lipoxygenase catalytic-domain-inhibitor complex identifies a substrate-binding channel for catalysis.</title>
        <authorList>
            <person name="Xu S."/>
            <person name="Mueser T.C."/>
            <person name="Marnett L.J."/>
            <person name="Funk M.O. Jr."/>
        </authorList>
    </citation>
    <scope>X-RAY CRYSTALLOGRAPHY (1.89 ANGSTROMS) OF 112-663 IN COMPLEX WITH INHIBITOR</scope>
    <scope>IRON-BINDING</scope>
</reference>
<keyword id="KW-0002">3D-structure</keyword>
<keyword id="KW-0106">Calcium</keyword>
<keyword id="KW-1003">Cell membrane</keyword>
<keyword id="KW-0963">Cytoplasm</keyword>
<keyword id="KW-0223">Dioxygenase</keyword>
<keyword id="KW-0903">Direct protein sequencing</keyword>
<keyword id="KW-0276">Fatty acid metabolism</keyword>
<keyword id="KW-0408">Iron</keyword>
<keyword id="KW-0551">Lipid droplet</keyword>
<keyword id="KW-0443">Lipid metabolism</keyword>
<keyword id="KW-0446">Lipid-binding</keyword>
<keyword id="KW-0472">Membrane</keyword>
<keyword id="KW-0479">Metal-binding</keyword>
<keyword id="KW-0560">Oxidoreductase</keyword>
<keyword id="KW-1185">Reference proteome</keyword>
<dbReference type="EC" id="1.13.11.31" evidence="11"/>
<dbReference type="EC" id="1.13.11.33" evidence="11"/>
<dbReference type="EC" id="1.13.11.-" evidence="5"/>
<dbReference type="EC" id="1.13.11.12" evidence="3"/>
<dbReference type="EMBL" id="M31417">
    <property type="protein sequence ID" value="AAA31068.1"/>
    <property type="molecule type" value="mRNA"/>
</dbReference>
<dbReference type="EMBL" id="D10621">
    <property type="protein sequence ID" value="BAA01471.1"/>
    <property type="molecule type" value="Genomic_DNA"/>
</dbReference>
<dbReference type="EMBL" id="CU972403">
    <property type="status" value="NOT_ANNOTATED_CDS"/>
    <property type="molecule type" value="Genomic_DNA"/>
</dbReference>
<dbReference type="PIR" id="A35087">
    <property type="entry name" value="A35087"/>
</dbReference>
<dbReference type="RefSeq" id="NP_999096.1">
    <property type="nucleotide sequence ID" value="NM_213931.1"/>
</dbReference>
<dbReference type="PDB" id="3RDE">
    <property type="method" value="X-ray"/>
    <property type="resolution" value="1.89 A"/>
    <property type="chains" value="A/B/C/D=112-663"/>
</dbReference>
<dbReference type="PDBsum" id="3RDE"/>
<dbReference type="SMR" id="P16469"/>
<dbReference type="FunCoup" id="P16469">
    <property type="interactions" value="291"/>
</dbReference>
<dbReference type="STRING" id="9823.ENSSSCP00000030128"/>
<dbReference type="BindingDB" id="P16469"/>
<dbReference type="ChEMBL" id="CHEMBL2381"/>
<dbReference type="SwissLipids" id="SLP:000001604"/>
<dbReference type="PaxDb" id="9823-ENSSSCP00000018988"/>
<dbReference type="PeptideAtlas" id="P16469"/>
<dbReference type="Ensembl" id="ENSSSCT00025067401.1">
    <property type="protein sequence ID" value="ENSSSCP00025028851.1"/>
    <property type="gene ID" value="ENSSSCG00025049493.1"/>
</dbReference>
<dbReference type="Ensembl" id="ENSSSCT00070040554.1">
    <property type="protein sequence ID" value="ENSSSCP00070034023.1"/>
    <property type="gene ID" value="ENSSSCG00070020395.1"/>
</dbReference>
<dbReference type="Ensembl" id="ENSSSCT00090011958">
    <property type="protein sequence ID" value="ENSSSCP00090007594"/>
    <property type="gene ID" value="ENSSSCG00090006764"/>
</dbReference>
<dbReference type="GeneID" id="396971"/>
<dbReference type="KEGG" id="ssc:396971"/>
<dbReference type="CTD" id="246"/>
<dbReference type="eggNOG" id="ENOG502QQSP">
    <property type="taxonomic scope" value="Eukaryota"/>
</dbReference>
<dbReference type="HOGENOM" id="CLU_004282_3_3_1"/>
<dbReference type="InParanoid" id="P16469"/>
<dbReference type="OrthoDB" id="407298at2759"/>
<dbReference type="TreeFam" id="TF105320"/>
<dbReference type="BRENDA" id="1.13.11.31">
    <property type="organism ID" value="6170"/>
</dbReference>
<dbReference type="Reactome" id="R-SSC-2142691">
    <property type="pathway name" value="Synthesis of Leukotrienes (LT) and Eoxins (EX)"/>
</dbReference>
<dbReference type="Reactome" id="R-SSC-2142712">
    <property type="pathway name" value="Synthesis of 12-eicosatetraenoic acid derivatives"/>
</dbReference>
<dbReference type="Reactome" id="R-SSC-2142770">
    <property type="pathway name" value="Synthesis of 15-eicosatetraenoic acid derivatives"/>
</dbReference>
<dbReference type="Reactome" id="R-SSC-9018677">
    <property type="pathway name" value="Biosynthesis of DHA-derived SPMs"/>
</dbReference>
<dbReference type="Reactome" id="R-SSC-9018681">
    <property type="pathway name" value="Biosynthesis of protectins"/>
</dbReference>
<dbReference type="Reactome" id="R-SSC-9018896">
    <property type="pathway name" value="Biosynthesis of E-series 18(S)-resolvins"/>
</dbReference>
<dbReference type="Reactome" id="R-SSC-9023661">
    <property type="pathway name" value="Biosynthesis of E-series 18(R)-resolvins"/>
</dbReference>
<dbReference type="Reactome" id="R-SSC-9025106">
    <property type="pathway name" value="Biosynthesis of DPAn-6 SPMs"/>
</dbReference>
<dbReference type="Reactome" id="R-SSC-9026286">
    <property type="pathway name" value="Biosynthesis of DPAn-3-derived protectins and resolvins"/>
</dbReference>
<dbReference type="SABIO-RK" id="P16469"/>
<dbReference type="UniPathway" id="UPA00881"/>
<dbReference type="EvolutionaryTrace" id="P16469"/>
<dbReference type="Proteomes" id="UP000008227">
    <property type="component" value="Unplaced"/>
</dbReference>
<dbReference type="Proteomes" id="UP000314985">
    <property type="component" value="Chromosome 12"/>
</dbReference>
<dbReference type="Proteomes" id="UP000694570">
    <property type="component" value="Unplaced"/>
</dbReference>
<dbReference type="Proteomes" id="UP000694571">
    <property type="component" value="Unplaced"/>
</dbReference>
<dbReference type="Proteomes" id="UP000694720">
    <property type="component" value="Unplaced"/>
</dbReference>
<dbReference type="Proteomes" id="UP000694722">
    <property type="component" value="Unplaced"/>
</dbReference>
<dbReference type="Proteomes" id="UP000694723">
    <property type="component" value="Unplaced"/>
</dbReference>
<dbReference type="Proteomes" id="UP000694724">
    <property type="component" value="Unplaced"/>
</dbReference>
<dbReference type="Proteomes" id="UP000694725">
    <property type="component" value="Unplaced"/>
</dbReference>
<dbReference type="Proteomes" id="UP000694726">
    <property type="component" value="Unplaced"/>
</dbReference>
<dbReference type="Proteomes" id="UP000694727">
    <property type="component" value="Unplaced"/>
</dbReference>
<dbReference type="Proteomes" id="UP000694728">
    <property type="component" value="Unplaced"/>
</dbReference>
<dbReference type="GO" id="GO:0009898">
    <property type="term" value="C:cytoplasmic side of plasma membrane"/>
    <property type="evidence" value="ECO:0000250"/>
    <property type="project" value="UniProtKB"/>
</dbReference>
<dbReference type="GO" id="GO:0005829">
    <property type="term" value="C:cytosol"/>
    <property type="evidence" value="ECO:0000250"/>
    <property type="project" value="UniProtKB"/>
</dbReference>
<dbReference type="GO" id="GO:0005811">
    <property type="term" value="C:lipid droplet"/>
    <property type="evidence" value="ECO:0000250"/>
    <property type="project" value="UniProtKB"/>
</dbReference>
<dbReference type="GO" id="GO:0016020">
    <property type="term" value="C:membrane"/>
    <property type="evidence" value="ECO:0000250"/>
    <property type="project" value="UniProtKB"/>
</dbReference>
<dbReference type="GO" id="GO:0005886">
    <property type="term" value="C:plasma membrane"/>
    <property type="evidence" value="ECO:0000250"/>
    <property type="project" value="UniProtKB"/>
</dbReference>
<dbReference type="GO" id="GO:0004052">
    <property type="term" value="F:arachidonate 12(S)-lipoxygenase activity"/>
    <property type="evidence" value="ECO:0000314"/>
    <property type="project" value="UniProtKB"/>
</dbReference>
<dbReference type="GO" id="GO:0050473">
    <property type="term" value="F:arachidonate 15-lipoxygenase activity"/>
    <property type="evidence" value="ECO:0000250"/>
    <property type="project" value="UniProtKB"/>
</dbReference>
<dbReference type="GO" id="GO:0005506">
    <property type="term" value="F:iron ion binding"/>
    <property type="evidence" value="ECO:0000314"/>
    <property type="project" value="UniProtKB"/>
</dbReference>
<dbReference type="GO" id="GO:0016165">
    <property type="term" value="F:linoleate 13S-lipoxygenase activity"/>
    <property type="evidence" value="ECO:0000250"/>
    <property type="project" value="UniProtKB"/>
</dbReference>
<dbReference type="GO" id="GO:0005546">
    <property type="term" value="F:phosphatidylinositol-4,5-bisphosphate binding"/>
    <property type="evidence" value="ECO:0000250"/>
    <property type="project" value="UniProtKB"/>
</dbReference>
<dbReference type="GO" id="GO:0043277">
    <property type="term" value="P:apoptotic cell clearance"/>
    <property type="evidence" value="ECO:0000250"/>
    <property type="project" value="UniProtKB"/>
</dbReference>
<dbReference type="GO" id="GO:0019369">
    <property type="term" value="P:arachidonate metabolic process"/>
    <property type="evidence" value="ECO:0000314"/>
    <property type="project" value="UniProtKB"/>
</dbReference>
<dbReference type="GO" id="GO:0030282">
    <property type="term" value="P:bone mineralization"/>
    <property type="evidence" value="ECO:0000250"/>
    <property type="project" value="UniProtKB"/>
</dbReference>
<dbReference type="GO" id="GO:0071277">
    <property type="term" value="P:cellular response to calcium ion"/>
    <property type="evidence" value="ECO:0000250"/>
    <property type="project" value="UniProtKB"/>
</dbReference>
<dbReference type="GO" id="GO:0035963">
    <property type="term" value="P:cellular response to interleukin-13"/>
    <property type="evidence" value="ECO:0000250"/>
    <property type="project" value="UniProtKB"/>
</dbReference>
<dbReference type="GO" id="GO:0019395">
    <property type="term" value="P:fatty acid oxidation"/>
    <property type="evidence" value="ECO:0000314"/>
    <property type="project" value="UniProtKB"/>
</dbReference>
<dbReference type="GO" id="GO:0043651">
    <property type="term" value="P:linoleic acid metabolic process"/>
    <property type="evidence" value="ECO:0000314"/>
    <property type="project" value="UniProtKB"/>
</dbReference>
<dbReference type="GO" id="GO:0006629">
    <property type="term" value="P:lipid metabolic process"/>
    <property type="evidence" value="ECO:0000314"/>
    <property type="project" value="UniProtKB"/>
</dbReference>
<dbReference type="GO" id="GO:0034440">
    <property type="term" value="P:lipid oxidation"/>
    <property type="evidence" value="ECO:0000318"/>
    <property type="project" value="GO_Central"/>
</dbReference>
<dbReference type="GO" id="GO:2001303">
    <property type="term" value="P:lipoxin A4 biosynthetic process"/>
    <property type="evidence" value="ECO:0000250"/>
    <property type="project" value="UniProtKB"/>
</dbReference>
<dbReference type="GO" id="GO:0019372">
    <property type="term" value="P:lipoxygenase pathway"/>
    <property type="evidence" value="ECO:0000314"/>
    <property type="project" value="UniProtKB"/>
</dbReference>
<dbReference type="GO" id="GO:0002820">
    <property type="term" value="P:negative regulation of adaptive immune response"/>
    <property type="evidence" value="ECO:0000250"/>
    <property type="project" value="UniProtKB"/>
</dbReference>
<dbReference type="GO" id="GO:0001503">
    <property type="term" value="P:ossification"/>
    <property type="evidence" value="ECO:0000250"/>
    <property type="project" value="UniProtKB"/>
</dbReference>
<dbReference type="GO" id="GO:0006646">
    <property type="term" value="P:phosphatidylethanolamine biosynthetic process"/>
    <property type="evidence" value="ECO:0000250"/>
    <property type="project" value="UniProtKB"/>
</dbReference>
<dbReference type="GO" id="GO:0030838">
    <property type="term" value="P:positive regulation of actin filament polymerization"/>
    <property type="evidence" value="ECO:0000250"/>
    <property type="project" value="UniProtKB"/>
</dbReference>
<dbReference type="GO" id="GO:0010811">
    <property type="term" value="P:positive regulation of cell-substrate adhesion"/>
    <property type="evidence" value="ECO:0000250"/>
    <property type="project" value="UniProtKB"/>
</dbReference>
<dbReference type="GO" id="GO:0070374">
    <property type="term" value="P:positive regulation of ERK1 and ERK2 cascade"/>
    <property type="evidence" value="ECO:0000250"/>
    <property type="project" value="UniProtKB"/>
</dbReference>
<dbReference type="GO" id="GO:1901074">
    <property type="term" value="P:regulation of engulfment of apoptotic cell"/>
    <property type="evidence" value="ECO:0000250"/>
    <property type="project" value="UniProtKB"/>
</dbReference>
<dbReference type="GO" id="GO:0050727">
    <property type="term" value="P:regulation of inflammatory response"/>
    <property type="evidence" value="ECO:0000250"/>
    <property type="project" value="UniProtKB"/>
</dbReference>
<dbReference type="GO" id="GO:0035358">
    <property type="term" value="P:regulation of peroxisome proliferator activated receptor signaling pathway"/>
    <property type="evidence" value="ECO:0000250"/>
    <property type="project" value="UniProtKB"/>
</dbReference>
<dbReference type="GO" id="GO:0034976">
    <property type="term" value="P:response to endoplasmic reticulum stress"/>
    <property type="evidence" value="ECO:0000250"/>
    <property type="project" value="UniProtKB"/>
</dbReference>
<dbReference type="GO" id="GO:0042060">
    <property type="term" value="P:wound healing"/>
    <property type="evidence" value="ECO:0000250"/>
    <property type="project" value="UniProtKB"/>
</dbReference>
<dbReference type="CDD" id="cd01753">
    <property type="entry name" value="PLAT_LOX"/>
    <property type="match status" value="1"/>
</dbReference>
<dbReference type="FunFam" id="3.10.450.60:FF:000004">
    <property type="entry name" value="Arachidonate 12-lipoxygenase, 12S-type"/>
    <property type="match status" value="1"/>
</dbReference>
<dbReference type="FunFam" id="1.20.245.10:FF:000001">
    <property type="entry name" value="Arachidonate 5-lipoxygenase a"/>
    <property type="match status" value="1"/>
</dbReference>
<dbReference type="FunFam" id="2.60.60.20:FF:000002">
    <property type="entry name" value="Arachidonate 5-lipoxygenase a"/>
    <property type="match status" value="1"/>
</dbReference>
<dbReference type="Gene3D" id="3.10.450.60">
    <property type="match status" value="1"/>
</dbReference>
<dbReference type="Gene3D" id="1.20.245.10">
    <property type="entry name" value="Lipoxygenase-1, Domain 5"/>
    <property type="match status" value="1"/>
</dbReference>
<dbReference type="Gene3D" id="2.60.60.20">
    <property type="entry name" value="PLAT/LH2 domain"/>
    <property type="match status" value="1"/>
</dbReference>
<dbReference type="InterPro" id="IPR000907">
    <property type="entry name" value="LipOase"/>
</dbReference>
<dbReference type="InterPro" id="IPR013819">
    <property type="entry name" value="LipOase_C"/>
</dbReference>
<dbReference type="InterPro" id="IPR036226">
    <property type="entry name" value="LipOase_C_sf"/>
</dbReference>
<dbReference type="InterPro" id="IPR020834">
    <property type="entry name" value="LipOase_CS"/>
</dbReference>
<dbReference type="InterPro" id="IPR020833">
    <property type="entry name" value="LipOase_Fe_BS"/>
</dbReference>
<dbReference type="InterPro" id="IPR001885">
    <property type="entry name" value="LipOase_mml"/>
</dbReference>
<dbReference type="InterPro" id="IPR001024">
    <property type="entry name" value="PLAT/LH2_dom"/>
</dbReference>
<dbReference type="InterPro" id="IPR036392">
    <property type="entry name" value="PLAT/LH2_dom_sf"/>
</dbReference>
<dbReference type="InterPro" id="IPR042062">
    <property type="entry name" value="PLAT_LOX_verte"/>
</dbReference>
<dbReference type="PANTHER" id="PTHR11771">
    <property type="entry name" value="LIPOXYGENASE"/>
    <property type="match status" value="1"/>
</dbReference>
<dbReference type="Pfam" id="PF00305">
    <property type="entry name" value="Lipoxygenase"/>
    <property type="match status" value="1"/>
</dbReference>
<dbReference type="Pfam" id="PF01477">
    <property type="entry name" value="PLAT"/>
    <property type="match status" value="1"/>
</dbReference>
<dbReference type="PRINTS" id="PR00087">
    <property type="entry name" value="LIPOXYGENASE"/>
</dbReference>
<dbReference type="PRINTS" id="PR00467">
    <property type="entry name" value="MAMLPOXGNASE"/>
</dbReference>
<dbReference type="SMART" id="SM00308">
    <property type="entry name" value="LH2"/>
    <property type="match status" value="1"/>
</dbReference>
<dbReference type="SUPFAM" id="SSF49723">
    <property type="entry name" value="Lipase/lipooxygenase domain (PLAT/LH2 domain)"/>
    <property type="match status" value="1"/>
</dbReference>
<dbReference type="SUPFAM" id="SSF48484">
    <property type="entry name" value="Lipoxigenase"/>
    <property type="match status" value="1"/>
</dbReference>
<dbReference type="PROSITE" id="PS00711">
    <property type="entry name" value="LIPOXYGENASE_1"/>
    <property type="match status" value="1"/>
</dbReference>
<dbReference type="PROSITE" id="PS00081">
    <property type="entry name" value="LIPOXYGENASE_2"/>
    <property type="match status" value="1"/>
</dbReference>
<dbReference type="PROSITE" id="PS51393">
    <property type="entry name" value="LIPOXYGENASE_3"/>
    <property type="match status" value="1"/>
</dbReference>
<dbReference type="PROSITE" id="PS50095">
    <property type="entry name" value="PLAT"/>
    <property type="match status" value="1"/>
</dbReference>
<gene>
    <name evidence="3" type="primary">ALOX15</name>
</gene>
<protein>
    <recommendedName>
        <fullName evidence="3">Polyunsaturated fatty acid lipoxygenase ALOX15</fullName>
    </recommendedName>
    <alternativeName>
        <fullName evidence="4">12/15-lipoxygenase</fullName>
    </alternativeName>
    <alternativeName>
        <fullName evidence="5">Arachidonate 12-lipoxygenase, leukocyte-type</fullName>
        <shortName>12-LOX</shortName>
        <ecNumber evidence="11">1.13.11.31</ecNumber>
    </alternativeName>
    <alternativeName>
        <fullName>Arachidonate 15-lipoxygenase</fullName>
        <shortName>15-LOX</shortName>
        <ecNumber evidence="11">1.13.11.33</ecNumber>
    </alternativeName>
    <alternativeName>
        <fullName evidence="3">Arachidonate omega-6 lipoxygenase</fullName>
    </alternativeName>
    <alternativeName>
        <fullName evidence="2">Erythroid cell-specific 15-lipoxygenase</fullName>
    </alternativeName>
    <alternativeName>
        <fullName evidence="5">Hepoxilin A3 synthase Alox15</fullName>
        <ecNumber evidence="5">1.13.11.-</ecNumber>
    </alternativeName>
    <alternativeName>
        <fullName evidence="3">Linoleate 13S-lipoxygenase</fullName>
        <ecNumber evidence="3">1.13.11.12</ecNumber>
    </alternativeName>
</protein>
<sequence>MGLYRVRVSTGSSFYAGSQNQVQLWLVGQHGEAALGWCLRPARGKETEFSVDVSEYLGPLLFVKLRKRHLLQDDAWFCNWISVQGPGANGDEFRFPCYRWVEGDRILSLPEGTARTVVDDPQGLFKKHREEELAERRKLYRWGNWKDGLILNIASTGIHDLPVDERFLEDKRIDFEASLAKGLADLAVKDSLNVLMSWNSLDSFNRIFWCGQSKLAERVRDSWKEDALFGYQFLNGTNPMLLRHSVELPARLKFPPGMEELQAQLEKELQGGTLFEADFSLLDGIKANVILCSQQYLAVPLVMLKLQPDGKLLPMVIQLQLPHEGSPLPPLFLPTDPPMVWLLAKCWVRSSDFQLHELHSHLLRGHLMAEVIAVATMRCLPSIHPIFKLLIPHFRYTMEINVRARNGLVSDLGIFDQVVSTGGGGHVELLRRAAALLTYSSFCPPDDLADRGLLGVESSFYAQDALRLWEVISRYVEGIVSLHYKTDESVKEDLELQAWCREFTEIGLLGAQDRGFPVSLQSKEQLCHFVTMCIFTCTGQHSSNHLGQLDWYSWVPNAPCTMRLPPPTTKDATLETVMATLPNFHQASLQMSITWQLGRCQPTMVALGQHEEEYFSGPGPKAVLTKFREELAALDKDIEVRNAKLALPYEYLRPSRVENSVAI</sequence>
<organism>
    <name type="scientific">Sus scrofa</name>
    <name type="common">Pig</name>
    <dbReference type="NCBI Taxonomy" id="9823"/>
    <lineage>
        <taxon>Eukaryota</taxon>
        <taxon>Metazoa</taxon>
        <taxon>Chordata</taxon>
        <taxon>Craniata</taxon>
        <taxon>Vertebrata</taxon>
        <taxon>Euteleostomi</taxon>
        <taxon>Mammalia</taxon>
        <taxon>Eutheria</taxon>
        <taxon>Laurasiatheria</taxon>
        <taxon>Artiodactyla</taxon>
        <taxon>Suina</taxon>
        <taxon>Suidae</taxon>
        <taxon>Sus</taxon>
    </lineage>
</organism>
<name>LOX15_PIG</name>